<organism>
    <name type="scientific">Saccharomyces cerevisiae (strain ATCC 204508 / S288c)</name>
    <name type="common">Baker's yeast</name>
    <dbReference type="NCBI Taxonomy" id="559292"/>
    <lineage>
        <taxon>Eukaryota</taxon>
        <taxon>Fungi</taxon>
        <taxon>Dikarya</taxon>
        <taxon>Ascomycota</taxon>
        <taxon>Saccharomycotina</taxon>
        <taxon>Saccharomycetes</taxon>
        <taxon>Saccharomycetales</taxon>
        <taxon>Saccharomycetaceae</taxon>
        <taxon>Saccharomyces</taxon>
    </lineage>
</organism>
<protein>
    <recommendedName>
        <fullName>Required for respiratory growth protein 7, mitochondrial</fullName>
    </recommendedName>
</protein>
<dbReference type="EMBL" id="Z75213">
    <property type="protein sequence ID" value="CAA99624.1"/>
    <property type="molecule type" value="Genomic_DNA"/>
</dbReference>
<dbReference type="EMBL" id="BK006948">
    <property type="protein sequence ID" value="DAA11071.1"/>
    <property type="molecule type" value="Genomic_DNA"/>
</dbReference>
<dbReference type="PIR" id="S67209">
    <property type="entry name" value="S67209"/>
</dbReference>
<dbReference type="RefSeq" id="NP_014950.1">
    <property type="nucleotide sequence ID" value="NM_001183725.1"/>
</dbReference>
<dbReference type="BioGRID" id="34694">
    <property type="interactions" value="30"/>
</dbReference>
<dbReference type="DIP" id="DIP-4068N"/>
<dbReference type="FunCoup" id="Q08774">
    <property type="interactions" value="72"/>
</dbReference>
<dbReference type="IntAct" id="Q08774">
    <property type="interactions" value="2"/>
</dbReference>
<dbReference type="MINT" id="Q08774"/>
<dbReference type="STRING" id="4932.YOR305W"/>
<dbReference type="iPTMnet" id="Q08774"/>
<dbReference type="PaxDb" id="4932-YOR305W"/>
<dbReference type="PeptideAtlas" id="Q08774"/>
<dbReference type="EnsemblFungi" id="YOR305W_mRNA">
    <property type="protein sequence ID" value="YOR305W"/>
    <property type="gene ID" value="YOR305W"/>
</dbReference>
<dbReference type="GeneID" id="854482"/>
<dbReference type="KEGG" id="sce:YOR305W"/>
<dbReference type="AGR" id="SGD:S000005832"/>
<dbReference type="SGD" id="S000005832">
    <property type="gene designation" value="RRG7"/>
</dbReference>
<dbReference type="VEuPathDB" id="FungiDB:YOR305W"/>
<dbReference type="eggNOG" id="ENOG502RZ1Q">
    <property type="taxonomic scope" value="Eukaryota"/>
</dbReference>
<dbReference type="HOGENOM" id="CLU_085105_1_0_1"/>
<dbReference type="InParanoid" id="Q08774"/>
<dbReference type="OMA" id="YYENEYA"/>
<dbReference type="OrthoDB" id="20734at2759"/>
<dbReference type="BioCyc" id="YEAST:G3O-33789-MONOMER"/>
<dbReference type="BioGRID-ORCS" id="854482">
    <property type="hits" value="4 hits in 10 CRISPR screens"/>
</dbReference>
<dbReference type="PRO" id="PR:Q08774"/>
<dbReference type="Proteomes" id="UP000002311">
    <property type="component" value="Chromosome XV"/>
</dbReference>
<dbReference type="RNAct" id="Q08774">
    <property type="molecule type" value="protein"/>
</dbReference>
<dbReference type="GO" id="GO:0005739">
    <property type="term" value="C:mitochondrion"/>
    <property type="evidence" value="ECO:0007005"/>
    <property type="project" value="SGD"/>
</dbReference>
<dbReference type="InterPro" id="IPR018828">
    <property type="entry name" value="RRG7"/>
</dbReference>
<dbReference type="PANTHER" id="PTHR28133">
    <property type="entry name" value="REQUIRED FOR RESPIRATORY GROWTH PROTEIN 7, MITOCHONDRIAL"/>
    <property type="match status" value="1"/>
</dbReference>
<dbReference type="PANTHER" id="PTHR28133:SF1">
    <property type="entry name" value="REQUIRED FOR RESPIRATORY GROWTH PROTEIN 7, MITOCHONDRIAL"/>
    <property type="match status" value="1"/>
</dbReference>
<dbReference type="Pfam" id="PF10356">
    <property type="entry name" value="RRG7"/>
    <property type="match status" value="1"/>
</dbReference>
<proteinExistence type="evidence at protein level"/>
<keyword id="KW-0496">Mitochondrion</keyword>
<keyword id="KW-1185">Reference proteome</keyword>
<comment type="subcellular location">
    <subcellularLocation>
        <location evidence="1">Mitochondrion</location>
    </subcellularLocation>
</comment>
<comment type="disruption phenotype">
    <text evidence="3 4">Impaired respiratory growth and sensitivity to 4-(N-(S-glutathionylacetyl)amino) phenylarsenoxide (GSAO).</text>
</comment>
<comment type="miscellaneous">
    <text evidence="2">Present with 1420 molecules/cell in log phase SD medium.</text>
</comment>
<comment type="similarity">
    <text evidence="5">Belongs to the RRG7 family.</text>
</comment>
<reference key="1">
    <citation type="journal article" date="1997" name="Nature">
        <title>The nucleotide sequence of Saccharomyces cerevisiae chromosome XV.</title>
        <authorList>
            <person name="Dujon B."/>
            <person name="Albermann K."/>
            <person name="Aldea M."/>
            <person name="Alexandraki D."/>
            <person name="Ansorge W."/>
            <person name="Arino J."/>
            <person name="Benes V."/>
            <person name="Bohn C."/>
            <person name="Bolotin-Fukuhara M."/>
            <person name="Bordonne R."/>
            <person name="Boyer J."/>
            <person name="Camasses A."/>
            <person name="Casamayor A."/>
            <person name="Casas C."/>
            <person name="Cheret G."/>
            <person name="Cziepluch C."/>
            <person name="Daignan-Fornier B."/>
            <person name="Dang V.-D."/>
            <person name="de Haan M."/>
            <person name="Delius H."/>
            <person name="Durand P."/>
            <person name="Fairhead C."/>
            <person name="Feldmann H."/>
            <person name="Gaillon L."/>
            <person name="Galisson F."/>
            <person name="Gamo F.-J."/>
            <person name="Gancedo C."/>
            <person name="Goffeau A."/>
            <person name="Goulding S.E."/>
            <person name="Grivell L.A."/>
            <person name="Habbig B."/>
            <person name="Hand N.J."/>
            <person name="Hani J."/>
            <person name="Hattenhorst U."/>
            <person name="Hebling U."/>
            <person name="Hernando Y."/>
            <person name="Herrero E."/>
            <person name="Heumann K."/>
            <person name="Hiesel R."/>
            <person name="Hilger F."/>
            <person name="Hofmann B."/>
            <person name="Hollenberg C.P."/>
            <person name="Hughes B."/>
            <person name="Jauniaux J.-C."/>
            <person name="Kalogeropoulos A."/>
            <person name="Katsoulou C."/>
            <person name="Kordes E."/>
            <person name="Lafuente M.J."/>
            <person name="Landt O."/>
            <person name="Louis E.J."/>
            <person name="Maarse A.C."/>
            <person name="Madania A."/>
            <person name="Mannhaupt G."/>
            <person name="Marck C."/>
            <person name="Martin R.P."/>
            <person name="Mewes H.-W."/>
            <person name="Michaux G."/>
            <person name="Paces V."/>
            <person name="Parle-McDermott A.G."/>
            <person name="Pearson B.M."/>
            <person name="Perrin A."/>
            <person name="Pettersson B."/>
            <person name="Poch O."/>
            <person name="Pohl T.M."/>
            <person name="Poirey R."/>
            <person name="Portetelle D."/>
            <person name="Pujol A."/>
            <person name="Purnelle B."/>
            <person name="Ramezani Rad M."/>
            <person name="Rechmann S."/>
            <person name="Schwager C."/>
            <person name="Schweizer M."/>
            <person name="Sor F."/>
            <person name="Sterky F."/>
            <person name="Tarassov I.A."/>
            <person name="Teodoru C."/>
            <person name="Tettelin H."/>
            <person name="Thierry A."/>
            <person name="Tobiasch E."/>
            <person name="Tzermia M."/>
            <person name="Uhlen M."/>
            <person name="Unseld M."/>
            <person name="Valens M."/>
            <person name="Vandenbol M."/>
            <person name="Vetter I."/>
            <person name="Vlcek C."/>
            <person name="Voet M."/>
            <person name="Volckaert G."/>
            <person name="Voss H."/>
            <person name="Wambutt R."/>
            <person name="Wedler H."/>
            <person name="Wiemann S."/>
            <person name="Winsor B."/>
            <person name="Wolfe K.H."/>
            <person name="Zollner A."/>
            <person name="Zumstein E."/>
            <person name="Kleine K."/>
        </authorList>
    </citation>
    <scope>NUCLEOTIDE SEQUENCE [LARGE SCALE GENOMIC DNA]</scope>
    <source>
        <strain>ATCC 204508 / S288c</strain>
    </source>
</reference>
<reference key="2">
    <citation type="journal article" date="2014" name="G3 (Bethesda)">
        <title>The reference genome sequence of Saccharomyces cerevisiae: Then and now.</title>
        <authorList>
            <person name="Engel S.R."/>
            <person name="Dietrich F.S."/>
            <person name="Fisk D.G."/>
            <person name="Binkley G."/>
            <person name="Balakrishnan R."/>
            <person name="Costanzo M.C."/>
            <person name="Dwight S.S."/>
            <person name="Hitz B.C."/>
            <person name="Karra K."/>
            <person name="Nash R.S."/>
            <person name="Weng S."/>
            <person name="Wong E.D."/>
            <person name="Lloyd P."/>
            <person name="Skrzypek M.S."/>
            <person name="Miyasato S.R."/>
            <person name="Simison M."/>
            <person name="Cherry J.M."/>
        </authorList>
    </citation>
    <scope>GENOME REANNOTATION</scope>
    <source>
        <strain>ATCC 204508 / S288c</strain>
    </source>
</reference>
<reference key="3">
    <citation type="journal article" date="2003" name="Nature">
        <title>Global analysis of protein localization in budding yeast.</title>
        <authorList>
            <person name="Huh W.-K."/>
            <person name="Falvo J.V."/>
            <person name="Gerke L.C."/>
            <person name="Carroll A.S."/>
            <person name="Howson R.W."/>
            <person name="Weissman J.S."/>
            <person name="O'Shea E.K."/>
        </authorList>
    </citation>
    <scope>SUBCELLULAR LOCATION [LARGE SCALE ANALYSIS]</scope>
</reference>
<reference key="4">
    <citation type="journal article" date="2003" name="Nature">
        <title>Global analysis of protein expression in yeast.</title>
        <authorList>
            <person name="Ghaemmaghami S."/>
            <person name="Huh W.-K."/>
            <person name="Bower K."/>
            <person name="Howson R.W."/>
            <person name="Belle A."/>
            <person name="Dephoure N."/>
            <person name="O'Shea E.K."/>
            <person name="Weissman J.S."/>
        </authorList>
    </citation>
    <scope>LEVEL OF PROTEIN EXPRESSION [LARGE SCALE ANALYSIS]</scope>
</reference>
<reference key="5">
    <citation type="journal article" date="2005" name="J. Natl. Cancer Inst.">
        <title>Mechanism of selectivity of an angiogenesis inhibitor from screening a genome-wide set of Saccharomyces cerevisiae deletion strains.</title>
        <authorList>
            <person name="Dilda P.J."/>
            <person name="Don A.S."/>
            <person name="Tanabe K.M."/>
            <person name="Higgins V.J."/>
            <person name="Allen J.D."/>
            <person name="Dawes I.W."/>
            <person name="Hogg P.J."/>
        </authorList>
    </citation>
    <scope>DISRUPTION PHENOTYPE</scope>
</reference>
<reference key="6">
    <citation type="journal article" date="2009" name="Genome Biol.">
        <title>Genome-wide deletion mutant analysis reveals genes required for respiratory growth, mitochondrial genome maintenance and mitochondrial protein synthesis in Saccharomyces cerevisiae.</title>
        <authorList>
            <person name="Merz S."/>
            <person name="Westermann B."/>
        </authorList>
    </citation>
    <scope>DISRUPTION PHENOTYPE</scope>
</reference>
<sequence length="242" mass="27967">MIKNYLGRRWLNNPAIQAYVKQNAAVAHSTVFQGNLYEYTVMRELSEKLRMTKLRKTGGAHDGGVDIKGSWPVDDIYWKISSLMPNLEMASNIKRTNSQNGFVLKPLKYRIIDHTFEPLKVLVQCKAFTKSKLSPREFRELVGTFTSLVSHSQRNKTVCIMCSPHMLTKDTLNLINNITLPLIYLRVEMLKEKTDGHFDLINSGKLINYYENSYASTLMQDCKISEWLKLKLYKNSDFNSEK</sequence>
<accession>Q08774</accession>
<accession>D6W305</accession>
<gene>
    <name type="primary">RRG7</name>
    <name type="ordered locus">YOR305W</name>
</gene>
<evidence type="ECO:0000269" key="1">
    <source>
    </source>
</evidence>
<evidence type="ECO:0000269" key="2">
    <source>
    </source>
</evidence>
<evidence type="ECO:0000269" key="3">
    <source>
    </source>
</evidence>
<evidence type="ECO:0000269" key="4">
    <source>
    </source>
</evidence>
<evidence type="ECO:0000305" key="5"/>
<name>RRG7_YEAST</name>
<feature type="chain" id="PRO_0000245286" description="Required for respiratory growth protein 7, mitochondrial">
    <location>
        <begin position="1"/>
        <end position="242"/>
    </location>
</feature>